<protein>
    <recommendedName>
        <fullName evidence="1">Putative pterin-4-alpha-carbinolamine dehydratase</fullName>
        <shortName evidence="1">PHS</shortName>
        <ecNumber evidence="1">4.2.1.96</ecNumber>
    </recommendedName>
    <alternativeName>
        <fullName evidence="1">4-alpha-hydroxy-tetrahydropterin dehydratase</fullName>
    </alternativeName>
    <alternativeName>
        <fullName evidence="1">Pterin carbinolamine dehydratase</fullName>
        <shortName evidence="1">PCD</shortName>
    </alternativeName>
</protein>
<proteinExistence type="inferred from homology"/>
<reference key="1">
    <citation type="submission" date="2006-12" db="EMBL/GenBank/DDBJ databases">
        <title>Complete sequence of Shewanella amazonensis SB2B.</title>
        <authorList>
            <consortium name="US DOE Joint Genome Institute"/>
            <person name="Copeland A."/>
            <person name="Lucas S."/>
            <person name="Lapidus A."/>
            <person name="Barry K."/>
            <person name="Detter J.C."/>
            <person name="Glavina del Rio T."/>
            <person name="Hammon N."/>
            <person name="Israni S."/>
            <person name="Dalin E."/>
            <person name="Tice H."/>
            <person name="Pitluck S."/>
            <person name="Munk A.C."/>
            <person name="Brettin T."/>
            <person name="Bruce D."/>
            <person name="Han C."/>
            <person name="Tapia R."/>
            <person name="Gilna P."/>
            <person name="Schmutz J."/>
            <person name="Larimer F."/>
            <person name="Land M."/>
            <person name="Hauser L."/>
            <person name="Kyrpides N."/>
            <person name="Mikhailova N."/>
            <person name="Fredrickson J."/>
            <person name="Richardson P."/>
        </authorList>
    </citation>
    <scope>NUCLEOTIDE SEQUENCE [LARGE SCALE GENOMIC DNA]</scope>
    <source>
        <strain>ATCC BAA-1098 / SB2B</strain>
    </source>
</reference>
<sequence>MSELASMKCEACQADAPKVTDAELAELIRMIPDWSVQVRDGIMQLERVYKFKNFKLAMAFSNKLAELAEEEFHHPGIFTEWGKVTVTWWSHSIKGLHRNDFIMAAKTDQLLD</sequence>
<evidence type="ECO:0000255" key="1">
    <source>
        <dbReference type="HAMAP-Rule" id="MF_00434"/>
    </source>
</evidence>
<keyword id="KW-0456">Lyase</keyword>
<keyword id="KW-1185">Reference proteome</keyword>
<accession>A1S7S0</accession>
<name>PHS_SHEAM</name>
<dbReference type="EC" id="4.2.1.96" evidence="1"/>
<dbReference type="EMBL" id="CP000507">
    <property type="protein sequence ID" value="ABM00427.1"/>
    <property type="molecule type" value="Genomic_DNA"/>
</dbReference>
<dbReference type="RefSeq" id="WP_011760334.1">
    <property type="nucleotide sequence ID" value="NC_008700.1"/>
</dbReference>
<dbReference type="SMR" id="A1S7S0"/>
<dbReference type="STRING" id="326297.Sama_2221"/>
<dbReference type="KEGG" id="saz:Sama_2221"/>
<dbReference type="eggNOG" id="COG2154">
    <property type="taxonomic scope" value="Bacteria"/>
</dbReference>
<dbReference type="HOGENOM" id="CLU_081974_2_2_6"/>
<dbReference type="OrthoDB" id="5294615at2"/>
<dbReference type="Proteomes" id="UP000009175">
    <property type="component" value="Chromosome"/>
</dbReference>
<dbReference type="GO" id="GO:0008124">
    <property type="term" value="F:4-alpha-hydroxytetrahydrobiopterin dehydratase activity"/>
    <property type="evidence" value="ECO:0007669"/>
    <property type="project" value="UniProtKB-UniRule"/>
</dbReference>
<dbReference type="GO" id="GO:0006729">
    <property type="term" value="P:tetrahydrobiopterin biosynthetic process"/>
    <property type="evidence" value="ECO:0007669"/>
    <property type="project" value="InterPro"/>
</dbReference>
<dbReference type="CDD" id="cd00913">
    <property type="entry name" value="PCD_DCoH_subfamily_a"/>
    <property type="match status" value="1"/>
</dbReference>
<dbReference type="Gene3D" id="3.30.1360.20">
    <property type="entry name" value="Transcriptional coactivator/pterin dehydratase"/>
    <property type="match status" value="1"/>
</dbReference>
<dbReference type="HAMAP" id="MF_00434">
    <property type="entry name" value="Pterin_4_alpha"/>
    <property type="match status" value="1"/>
</dbReference>
<dbReference type="InterPro" id="IPR036428">
    <property type="entry name" value="PCD_sf"/>
</dbReference>
<dbReference type="InterPro" id="IPR050376">
    <property type="entry name" value="Pterin-4-alpha-carb_dehyd"/>
</dbReference>
<dbReference type="InterPro" id="IPR001533">
    <property type="entry name" value="Pterin_deHydtase"/>
</dbReference>
<dbReference type="NCBIfam" id="NF002016">
    <property type="entry name" value="PRK00823.1-1"/>
    <property type="match status" value="1"/>
</dbReference>
<dbReference type="PANTHER" id="PTHR42805">
    <property type="entry name" value="PTERIN-4-ALPHA-CARBINOLAMINE DEHYDRATASE-RELATED"/>
    <property type="match status" value="1"/>
</dbReference>
<dbReference type="PANTHER" id="PTHR42805:SF1">
    <property type="entry name" value="PTERIN-4-ALPHA-CARBINOLAMINE DEHYDRATASE-RELATED"/>
    <property type="match status" value="1"/>
</dbReference>
<dbReference type="Pfam" id="PF01329">
    <property type="entry name" value="Pterin_4a"/>
    <property type="match status" value="1"/>
</dbReference>
<dbReference type="SUPFAM" id="SSF55248">
    <property type="entry name" value="PCD-like"/>
    <property type="match status" value="1"/>
</dbReference>
<organism>
    <name type="scientific">Shewanella amazonensis (strain ATCC BAA-1098 / SB2B)</name>
    <dbReference type="NCBI Taxonomy" id="326297"/>
    <lineage>
        <taxon>Bacteria</taxon>
        <taxon>Pseudomonadati</taxon>
        <taxon>Pseudomonadota</taxon>
        <taxon>Gammaproteobacteria</taxon>
        <taxon>Alteromonadales</taxon>
        <taxon>Shewanellaceae</taxon>
        <taxon>Shewanella</taxon>
    </lineage>
</organism>
<comment type="catalytic activity">
    <reaction evidence="1">
        <text>(4aS,6R)-4a-hydroxy-L-erythro-5,6,7,8-tetrahydrobiopterin = (6R)-L-erythro-6,7-dihydrobiopterin + H2O</text>
        <dbReference type="Rhea" id="RHEA:11920"/>
        <dbReference type="ChEBI" id="CHEBI:15377"/>
        <dbReference type="ChEBI" id="CHEBI:15642"/>
        <dbReference type="ChEBI" id="CHEBI:43120"/>
        <dbReference type="EC" id="4.2.1.96"/>
    </reaction>
</comment>
<comment type="similarity">
    <text evidence="1">Belongs to the pterin-4-alpha-carbinolamine dehydratase family.</text>
</comment>
<gene>
    <name type="ordered locus">Sama_2221</name>
</gene>
<feature type="chain" id="PRO_1000050452" description="Putative pterin-4-alpha-carbinolamine dehydratase">
    <location>
        <begin position="1"/>
        <end position="112"/>
    </location>
</feature>